<sequence length="258" mass="29586">MLILISPAKTLDYQSPLTTTRYTLPELLDNSQQLIHEARKLTPPQISSLMRISDKLAGINAARFHDWQPDFTPENARQAILAFKGDVYTGLQAETFSEDDFDFAQQHLRMLSGLYGVLRPLDLMQPYRLEMGIRLENARGKDLYQFWGDIITNKLNEALAAQGDNVVINLASDEYFKSVKPKKLNAEIIKPVFLDEKNGKFKIISFYAKKARGLMSRFIIENRLTKPEQLTGFNSEGYFFDEASSSNGELVFKRYEQR</sequence>
<reference key="1">
    <citation type="journal article" date="2002" name="Proc. Natl. Acad. Sci. U.S.A.">
        <title>Extensive mosaic structure revealed by the complete genome sequence of uropathogenic Escherichia coli.</title>
        <authorList>
            <person name="Welch R.A."/>
            <person name="Burland V."/>
            <person name="Plunkett G. III"/>
            <person name="Redford P."/>
            <person name="Roesch P."/>
            <person name="Rasko D."/>
            <person name="Buckles E.L."/>
            <person name="Liou S.-R."/>
            <person name="Boutin A."/>
            <person name="Hackett J."/>
            <person name="Stroud D."/>
            <person name="Mayhew G.F."/>
            <person name="Rose D.J."/>
            <person name="Zhou S."/>
            <person name="Schwartz D.C."/>
            <person name="Perna N.T."/>
            <person name="Mobley H.L.T."/>
            <person name="Donnenberg M.S."/>
            <person name="Blattner F.R."/>
        </authorList>
    </citation>
    <scope>NUCLEOTIDE SEQUENCE [LARGE SCALE GENOMIC DNA]</scope>
    <source>
        <strain>CFT073 / ATCC 700928 / UPEC</strain>
    </source>
</reference>
<protein>
    <recommendedName>
        <fullName evidence="1">UPF0246 protein YaaA</fullName>
    </recommendedName>
</protein>
<dbReference type="EMBL" id="AE014075">
    <property type="protein sequence ID" value="AAN78510.1"/>
    <property type="molecule type" value="Genomic_DNA"/>
</dbReference>
<dbReference type="RefSeq" id="WP_000906193.1">
    <property type="nucleotide sequence ID" value="NZ_CP051263.1"/>
</dbReference>
<dbReference type="SMR" id="Q8FLD3"/>
<dbReference type="STRING" id="199310.c0010"/>
<dbReference type="KEGG" id="ecc:c0010"/>
<dbReference type="eggNOG" id="COG3022">
    <property type="taxonomic scope" value="Bacteria"/>
</dbReference>
<dbReference type="HOGENOM" id="CLU_061989_0_0_6"/>
<dbReference type="BioCyc" id="ECOL199310:C0010-MONOMER"/>
<dbReference type="Proteomes" id="UP000001410">
    <property type="component" value="Chromosome"/>
</dbReference>
<dbReference type="GO" id="GO:0005829">
    <property type="term" value="C:cytosol"/>
    <property type="evidence" value="ECO:0007669"/>
    <property type="project" value="TreeGrafter"/>
</dbReference>
<dbReference type="GO" id="GO:0033194">
    <property type="term" value="P:response to hydroperoxide"/>
    <property type="evidence" value="ECO:0007669"/>
    <property type="project" value="TreeGrafter"/>
</dbReference>
<dbReference type="HAMAP" id="MF_00652">
    <property type="entry name" value="UPF0246"/>
    <property type="match status" value="1"/>
</dbReference>
<dbReference type="InterPro" id="IPR005583">
    <property type="entry name" value="YaaA"/>
</dbReference>
<dbReference type="NCBIfam" id="NF002541">
    <property type="entry name" value="PRK02101.1-1"/>
    <property type="match status" value="1"/>
</dbReference>
<dbReference type="NCBIfam" id="NF002542">
    <property type="entry name" value="PRK02101.1-3"/>
    <property type="match status" value="1"/>
</dbReference>
<dbReference type="PANTHER" id="PTHR30283:SF4">
    <property type="entry name" value="PEROXIDE STRESS RESISTANCE PROTEIN YAAA"/>
    <property type="match status" value="1"/>
</dbReference>
<dbReference type="PANTHER" id="PTHR30283">
    <property type="entry name" value="PEROXIDE STRESS RESPONSE PROTEIN YAAA"/>
    <property type="match status" value="1"/>
</dbReference>
<dbReference type="Pfam" id="PF03883">
    <property type="entry name" value="H2O2_YaaD"/>
    <property type="match status" value="1"/>
</dbReference>
<feature type="chain" id="PRO_0000203985" description="UPF0246 protein YaaA">
    <location>
        <begin position="1"/>
        <end position="258"/>
    </location>
</feature>
<evidence type="ECO:0000255" key="1">
    <source>
        <dbReference type="HAMAP-Rule" id="MF_00652"/>
    </source>
</evidence>
<organism>
    <name type="scientific">Escherichia coli O6:H1 (strain CFT073 / ATCC 700928 / UPEC)</name>
    <dbReference type="NCBI Taxonomy" id="199310"/>
    <lineage>
        <taxon>Bacteria</taxon>
        <taxon>Pseudomonadati</taxon>
        <taxon>Pseudomonadota</taxon>
        <taxon>Gammaproteobacteria</taxon>
        <taxon>Enterobacterales</taxon>
        <taxon>Enterobacteriaceae</taxon>
        <taxon>Escherichia</taxon>
    </lineage>
</organism>
<comment type="similarity">
    <text evidence="1">Belongs to the UPF0246 family.</text>
</comment>
<gene>
    <name evidence="1" type="primary">yaaA</name>
    <name type="ordered locus">c0010</name>
</gene>
<proteinExistence type="inferred from homology"/>
<accession>Q8FLD3</accession>
<name>YAAA_ECOL6</name>
<keyword id="KW-1185">Reference proteome</keyword>